<protein>
    <recommendedName>
        <fullName>UPF0688 protein C1orf174 homolog</fullName>
    </recommendedName>
</protein>
<organism>
    <name type="scientific">Mus musculus</name>
    <name type="common">Mouse</name>
    <dbReference type="NCBI Taxonomy" id="10090"/>
    <lineage>
        <taxon>Eukaryota</taxon>
        <taxon>Metazoa</taxon>
        <taxon>Chordata</taxon>
        <taxon>Craniata</taxon>
        <taxon>Vertebrata</taxon>
        <taxon>Euteleostomi</taxon>
        <taxon>Mammalia</taxon>
        <taxon>Eutheria</taxon>
        <taxon>Euarchontoglires</taxon>
        <taxon>Glires</taxon>
        <taxon>Rodentia</taxon>
        <taxon>Myomorpha</taxon>
        <taxon>Muroidea</taxon>
        <taxon>Muridae</taxon>
        <taxon>Murinae</taxon>
        <taxon>Mus</taxon>
        <taxon>Mus</taxon>
    </lineage>
</organism>
<dbReference type="EMBL" id="AK039812">
    <property type="protein sequence ID" value="BAC30459.1"/>
    <property type="molecule type" value="mRNA"/>
</dbReference>
<dbReference type="EMBL" id="AL806525">
    <property type="protein sequence ID" value="CAM18763.1"/>
    <property type="status" value="ALT_SEQ"/>
    <property type="molecule type" value="Genomic_DNA"/>
</dbReference>
<dbReference type="EMBL" id="AL806525">
    <property type="protein sequence ID" value="CAM18764.1"/>
    <property type="molecule type" value="Genomic_DNA"/>
</dbReference>
<dbReference type="EMBL" id="BC052148">
    <property type="protein sequence ID" value="AAH52148.1"/>
    <property type="molecule type" value="mRNA"/>
</dbReference>
<dbReference type="CCDS" id="CCDS19003.1"/>
<dbReference type="RefSeq" id="NP_001156491.1">
    <property type="nucleotide sequence ID" value="NM_001163019.1"/>
</dbReference>
<dbReference type="RefSeq" id="NP_780496.2">
    <property type="nucleotide sequence ID" value="NM_175287.4"/>
</dbReference>
<dbReference type="FunCoup" id="Q80WR5">
    <property type="interactions" value="1984"/>
</dbReference>
<dbReference type="STRING" id="10090.ENSMUSP00000054638"/>
<dbReference type="iPTMnet" id="Q80WR5"/>
<dbReference type="PhosphoSitePlus" id="Q80WR5"/>
<dbReference type="SwissPalm" id="Q80WR5"/>
<dbReference type="jPOST" id="Q80WR5"/>
<dbReference type="PaxDb" id="10090-ENSMUSP00000054638"/>
<dbReference type="PeptideAtlas" id="Q80WR5"/>
<dbReference type="Pumba" id="Q80WR5"/>
<dbReference type="Antibodypedia" id="2157">
    <property type="antibodies" value="65 antibodies from 14 providers"/>
</dbReference>
<dbReference type="Ensembl" id="ENSMUST00000058393.9">
    <property type="protein sequence ID" value="ENSMUSP00000054638.3"/>
    <property type="gene ID" value="ENSMUSG00000047613.11"/>
</dbReference>
<dbReference type="GeneID" id="97159"/>
<dbReference type="KEGG" id="mmu:97159"/>
<dbReference type="UCSC" id="uc008wau.2">
    <property type="organism name" value="mouse"/>
</dbReference>
<dbReference type="AGR" id="MGI:2140680"/>
<dbReference type="MGI" id="MGI:2140680">
    <property type="gene designation" value="A430005L14Rik"/>
</dbReference>
<dbReference type="VEuPathDB" id="HostDB:ENSMUSG00000047613"/>
<dbReference type="eggNOG" id="ENOG502SANK">
    <property type="taxonomic scope" value="Eukaryota"/>
</dbReference>
<dbReference type="GeneTree" id="ENSGT00390000016496"/>
<dbReference type="HOGENOM" id="CLU_096286_0_0_1"/>
<dbReference type="InParanoid" id="Q80WR5"/>
<dbReference type="OMA" id="FKYDRGH"/>
<dbReference type="OrthoDB" id="8730115at2759"/>
<dbReference type="PhylomeDB" id="Q80WR5"/>
<dbReference type="TreeFam" id="TF336079"/>
<dbReference type="BioGRID-ORCS" id="97159">
    <property type="hits" value="4 hits in 76 CRISPR screens"/>
</dbReference>
<dbReference type="PRO" id="PR:Q80WR5"/>
<dbReference type="Proteomes" id="UP000000589">
    <property type="component" value="Chromosome 4"/>
</dbReference>
<dbReference type="RNAct" id="Q80WR5">
    <property type="molecule type" value="protein"/>
</dbReference>
<dbReference type="Bgee" id="ENSMUSG00000047613">
    <property type="expression patterns" value="Expressed in spermatocyte and 252 other cell types or tissues"/>
</dbReference>
<dbReference type="ExpressionAtlas" id="Q80WR5">
    <property type="expression patterns" value="baseline and differential"/>
</dbReference>
<dbReference type="GO" id="GO:0005654">
    <property type="term" value="C:nucleoplasm"/>
    <property type="evidence" value="ECO:0007669"/>
    <property type="project" value="Ensembl"/>
</dbReference>
<dbReference type="InterPro" id="IPR031530">
    <property type="entry name" value="UPF0688"/>
</dbReference>
<dbReference type="PANTHER" id="PTHR28491">
    <property type="entry name" value="UPF0688 PROTEIN C1ORF174"/>
    <property type="match status" value="1"/>
</dbReference>
<dbReference type="PANTHER" id="PTHR28491:SF1">
    <property type="entry name" value="UPF0688 PROTEIN C1ORF174"/>
    <property type="match status" value="1"/>
</dbReference>
<dbReference type="Pfam" id="PF15772">
    <property type="entry name" value="UPF0688"/>
    <property type="match status" value="1"/>
</dbReference>
<comment type="subcellular location">
    <subcellularLocation>
        <location evidence="1">Nucleus</location>
    </subcellularLocation>
</comment>
<comment type="similarity">
    <text evidence="4">Belongs to the UPF0688 family.</text>
</comment>
<comment type="sequence caution" evidence="4">
    <conflict type="erroneous gene model prediction">
        <sequence resource="EMBL-CDS" id="CAM18763"/>
    </conflict>
</comment>
<evidence type="ECO:0000250" key="1"/>
<evidence type="ECO:0000250" key="2">
    <source>
        <dbReference type="UniProtKB" id="Q8IYL3"/>
    </source>
</evidence>
<evidence type="ECO:0000256" key="3">
    <source>
        <dbReference type="SAM" id="MobiDB-lite"/>
    </source>
</evidence>
<evidence type="ECO:0000305" key="4"/>
<accession>Q80WR5</accession>
<accession>A2AM12</accession>
<accession>Q8CA21</accession>
<reference key="1">
    <citation type="journal article" date="2005" name="Science">
        <title>The transcriptional landscape of the mammalian genome.</title>
        <authorList>
            <person name="Carninci P."/>
            <person name="Kasukawa T."/>
            <person name="Katayama S."/>
            <person name="Gough J."/>
            <person name="Frith M.C."/>
            <person name="Maeda N."/>
            <person name="Oyama R."/>
            <person name="Ravasi T."/>
            <person name="Lenhard B."/>
            <person name="Wells C."/>
            <person name="Kodzius R."/>
            <person name="Shimokawa K."/>
            <person name="Bajic V.B."/>
            <person name="Brenner S.E."/>
            <person name="Batalov S."/>
            <person name="Forrest A.R."/>
            <person name="Zavolan M."/>
            <person name="Davis M.J."/>
            <person name="Wilming L.G."/>
            <person name="Aidinis V."/>
            <person name="Allen J.E."/>
            <person name="Ambesi-Impiombato A."/>
            <person name="Apweiler R."/>
            <person name="Aturaliya R.N."/>
            <person name="Bailey T.L."/>
            <person name="Bansal M."/>
            <person name="Baxter L."/>
            <person name="Beisel K.W."/>
            <person name="Bersano T."/>
            <person name="Bono H."/>
            <person name="Chalk A.M."/>
            <person name="Chiu K.P."/>
            <person name="Choudhary V."/>
            <person name="Christoffels A."/>
            <person name="Clutterbuck D.R."/>
            <person name="Crowe M.L."/>
            <person name="Dalla E."/>
            <person name="Dalrymple B.P."/>
            <person name="de Bono B."/>
            <person name="Della Gatta G."/>
            <person name="di Bernardo D."/>
            <person name="Down T."/>
            <person name="Engstrom P."/>
            <person name="Fagiolini M."/>
            <person name="Faulkner G."/>
            <person name="Fletcher C.F."/>
            <person name="Fukushima T."/>
            <person name="Furuno M."/>
            <person name="Futaki S."/>
            <person name="Gariboldi M."/>
            <person name="Georgii-Hemming P."/>
            <person name="Gingeras T.R."/>
            <person name="Gojobori T."/>
            <person name="Green R.E."/>
            <person name="Gustincich S."/>
            <person name="Harbers M."/>
            <person name="Hayashi Y."/>
            <person name="Hensch T.K."/>
            <person name="Hirokawa N."/>
            <person name="Hill D."/>
            <person name="Huminiecki L."/>
            <person name="Iacono M."/>
            <person name="Ikeo K."/>
            <person name="Iwama A."/>
            <person name="Ishikawa T."/>
            <person name="Jakt M."/>
            <person name="Kanapin A."/>
            <person name="Katoh M."/>
            <person name="Kawasawa Y."/>
            <person name="Kelso J."/>
            <person name="Kitamura H."/>
            <person name="Kitano H."/>
            <person name="Kollias G."/>
            <person name="Krishnan S.P."/>
            <person name="Kruger A."/>
            <person name="Kummerfeld S.K."/>
            <person name="Kurochkin I.V."/>
            <person name="Lareau L.F."/>
            <person name="Lazarevic D."/>
            <person name="Lipovich L."/>
            <person name="Liu J."/>
            <person name="Liuni S."/>
            <person name="McWilliam S."/>
            <person name="Madan Babu M."/>
            <person name="Madera M."/>
            <person name="Marchionni L."/>
            <person name="Matsuda H."/>
            <person name="Matsuzawa S."/>
            <person name="Miki H."/>
            <person name="Mignone F."/>
            <person name="Miyake S."/>
            <person name="Morris K."/>
            <person name="Mottagui-Tabar S."/>
            <person name="Mulder N."/>
            <person name="Nakano N."/>
            <person name="Nakauchi H."/>
            <person name="Ng P."/>
            <person name="Nilsson R."/>
            <person name="Nishiguchi S."/>
            <person name="Nishikawa S."/>
            <person name="Nori F."/>
            <person name="Ohara O."/>
            <person name="Okazaki Y."/>
            <person name="Orlando V."/>
            <person name="Pang K.C."/>
            <person name="Pavan W.J."/>
            <person name="Pavesi G."/>
            <person name="Pesole G."/>
            <person name="Petrovsky N."/>
            <person name="Piazza S."/>
            <person name="Reed J."/>
            <person name="Reid J.F."/>
            <person name="Ring B.Z."/>
            <person name="Ringwald M."/>
            <person name="Rost B."/>
            <person name="Ruan Y."/>
            <person name="Salzberg S.L."/>
            <person name="Sandelin A."/>
            <person name="Schneider C."/>
            <person name="Schoenbach C."/>
            <person name="Sekiguchi K."/>
            <person name="Semple C.A."/>
            <person name="Seno S."/>
            <person name="Sessa L."/>
            <person name="Sheng Y."/>
            <person name="Shibata Y."/>
            <person name="Shimada H."/>
            <person name="Shimada K."/>
            <person name="Silva D."/>
            <person name="Sinclair B."/>
            <person name="Sperling S."/>
            <person name="Stupka E."/>
            <person name="Sugiura K."/>
            <person name="Sultana R."/>
            <person name="Takenaka Y."/>
            <person name="Taki K."/>
            <person name="Tammoja K."/>
            <person name="Tan S.L."/>
            <person name="Tang S."/>
            <person name="Taylor M.S."/>
            <person name="Tegner J."/>
            <person name="Teichmann S.A."/>
            <person name="Ueda H.R."/>
            <person name="van Nimwegen E."/>
            <person name="Verardo R."/>
            <person name="Wei C.L."/>
            <person name="Yagi K."/>
            <person name="Yamanishi H."/>
            <person name="Zabarovsky E."/>
            <person name="Zhu S."/>
            <person name="Zimmer A."/>
            <person name="Hide W."/>
            <person name="Bult C."/>
            <person name="Grimmond S.M."/>
            <person name="Teasdale R.D."/>
            <person name="Liu E.T."/>
            <person name="Brusic V."/>
            <person name="Quackenbush J."/>
            <person name="Wahlestedt C."/>
            <person name="Mattick J.S."/>
            <person name="Hume D.A."/>
            <person name="Kai C."/>
            <person name="Sasaki D."/>
            <person name="Tomaru Y."/>
            <person name="Fukuda S."/>
            <person name="Kanamori-Katayama M."/>
            <person name="Suzuki M."/>
            <person name="Aoki J."/>
            <person name="Arakawa T."/>
            <person name="Iida J."/>
            <person name="Imamura K."/>
            <person name="Itoh M."/>
            <person name="Kato T."/>
            <person name="Kawaji H."/>
            <person name="Kawagashira N."/>
            <person name="Kawashima T."/>
            <person name="Kojima M."/>
            <person name="Kondo S."/>
            <person name="Konno H."/>
            <person name="Nakano K."/>
            <person name="Ninomiya N."/>
            <person name="Nishio T."/>
            <person name="Okada M."/>
            <person name="Plessy C."/>
            <person name="Shibata K."/>
            <person name="Shiraki T."/>
            <person name="Suzuki S."/>
            <person name="Tagami M."/>
            <person name="Waki K."/>
            <person name="Watahiki A."/>
            <person name="Okamura-Oho Y."/>
            <person name="Suzuki H."/>
            <person name="Kawai J."/>
            <person name="Hayashizaki Y."/>
        </authorList>
    </citation>
    <scope>NUCLEOTIDE SEQUENCE [LARGE SCALE MRNA]</scope>
    <source>
        <strain>C57BL/6J</strain>
        <tissue>Thymus</tissue>
    </source>
</reference>
<reference key="2">
    <citation type="journal article" date="2009" name="PLoS Biol.">
        <title>Lineage-specific biology revealed by a finished genome assembly of the mouse.</title>
        <authorList>
            <person name="Church D.M."/>
            <person name="Goodstadt L."/>
            <person name="Hillier L.W."/>
            <person name="Zody M.C."/>
            <person name="Goldstein S."/>
            <person name="She X."/>
            <person name="Bult C.J."/>
            <person name="Agarwala R."/>
            <person name="Cherry J.L."/>
            <person name="DiCuccio M."/>
            <person name="Hlavina W."/>
            <person name="Kapustin Y."/>
            <person name="Meric P."/>
            <person name="Maglott D."/>
            <person name="Birtle Z."/>
            <person name="Marques A.C."/>
            <person name="Graves T."/>
            <person name="Zhou S."/>
            <person name="Teague B."/>
            <person name="Potamousis K."/>
            <person name="Churas C."/>
            <person name="Place M."/>
            <person name="Herschleb J."/>
            <person name="Runnheim R."/>
            <person name="Forrest D."/>
            <person name="Amos-Landgraf J."/>
            <person name="Schwartz D.C."/>
            <person name="Cheng Z."/>
            <person name="Lindblad-Toh K."/>
            <person name="Eichler E.E."/>
            <person name="Ponting C.P."/>
        </authorList>
    </citation>
    <scope>NUCLEOTIDE SEQUENCE [LARGE SCALE GENOMIC DNA]</scope>
    <source>
        <strain>C57BL/6J</strain>
    </source>
</reference>
<reference key="3">
    <citation type="journal article" date="2004" name="Genome Res.">
        <title>The status, quality, and expansion of the NIH full-length cDNA project: the Mammalian Gene Collection (MGC).</title>
        <authorList>
            <consortium name="The MGC Project Team"/>
        </authorList>
    </citation>
    <scope>NUCLEOTIDE SEQUENCE [LARGE SCALE MRNA]</scope>
    <source>
        <tissue>Testis</tissue>
    </source>
</reference>
<reference key="4">
    <citation type="journal article" date="2007" name="Proc. Natl. Acad. Sci. U.S.A.">
        <title>Large-scale phosphorylation analysis of mouse liver.</title>
        <authorList>
            <person name="Villen J."/>
            <person name="Beausoleil S.A."/>
            <person name="Gerber S.A."/>
            <person name="Gygi S.P."/>
        </authorList>
    </citation>
    <scope>IDENTIFICATION BY MASS SPECTROMETRY [LARGE SCALE ANALYSIS]</scope>
    <source>
        <tissue>Liver</tissue>
    </source>
</reference>
<reference key="5">
    <citation type="journal article" date="2010" name="Cell">
        <title>A tissue-specific atlas of mouse protein phosphorylation and expression.</title>
        <authorList>
            <person name="Huttlin E.L."/>
            <person name="Jedrychowski M.P."/>
            <person name="Elias J.E."/>
            <person name="Goswami T."/>
            <person name="Rad R."/>
            <person name="Beausoleil S.A."/>
            <person name="Villen J."/>
            <person name="Haas W."/>
            <person name="Sowa M.E."/>
            <person name="Gygi S.P."/>
        </authorList>
    </citation>
    <scope>IDENTIFICATION BY MASS SPECTROMETRY [LARGE SCALE ANALYSIS]</scope>
    <source>
        <tissue>Heart</tissue>
        <tissue>Pancreas</tissue>
        <tissue>Testis</tissue>
    </source>
</reference>
<sequence length="230" mass="24774">MRSRKLTGGVRSSARLRARSYSSASLASARDVTSSTSAKTTCLASSSHKATDRRTSKKFKYDKGHLVKAELQKLDPKSDISSLPKVAPVAPCENKFAEDSAEAAVSVPESREPPQGCSTPASEEPSVKAENGLSTEPSSAAAAQEPDDSSAGQAEPVPRTEEVRASVLQMDSSIFLDDDSNQPMPVSRFFGNVELMQDLPPASSSYPSMSRREFRKMHFRAKDDEDDAEG</sequence>
<proteinExistence type="evidence at protein level"/>
<feature type="chain" id="PRO_0000294245" description="UPF0688 protein C1orf174 homolog">
    <location>
        <begin position="1"/>
        <end position="230"/>
    </location>
</feature>
<feature type="region of interest" description="Disordered" evidence="3">
    <location>
        <begin position="1"/>
        <end position="85"/>
    </location>
</feature>
<feature type="region of interest" description="Disordered" evidence="3">
    <location>
        <begin position="97"/>
        <end position="166"/>
    </location>
</feature>
<feature type="compositionally biased region" description="Low complexity" evidence="3">
    <location>
        <begin position="11"/>
        <end position="30"/>
    </location>
</feature>
<feature type="compositionally biased region" description="Polar residues" evidence="3">
    <location>
        <begin position="31"/>
        <end position="48"/>
    </location>
</feature>
<feature type="compositionally biased region" description="Basic and acidic residues" evidence="3">
    <location>
        <begin position="49"/>
        <end position="78"/>
    </location>
</feature>
<feature type="modified residue" description="Phosphoserine" evidence="2">
    <location>
        <position position="180"/>
    </location>
</feature>
<feature type="sequence conflict" description="In Ref. 1; BAC30459." evidence="4" ref="1">
    <original>D</original>
    <variation>A</variation>
    <location>
        <position position="52"/>
    </location>
</feature>
<keyword id="KW-0539">Nucleus</keyword>
<keyword id="KW-0597">Phosphoprotein</keyword>
<keyword id="KW-1185">Reference proteome</keyword>
<name>CA174_MOUSE</name>